<gene>
    <name evidence="1" type="primary">ispH</name>
    <name type="synonym">yqfP</name>
    <name type="ordered locus">BSU25160</name>
</gene>
<dbReference type="EC" id="1.17.7.4" evidence="1"/>
<dbReference type="EMBL" id="D84432">
    <property type="protein sequence ID" value="BAA12493.1"/>
    <property type="molecule type" value="Genomic_DNA"/>
</dbReference>
<dbReference type="EMBL" id="AL009126">
    <property type="protein sequence ID" value="CAB14446.2"/>
    <property type="molecule type" value="Genomic_DNA"/>
</dbReference>
<dbReference type="PIR" id="B69954">
    <property type="entry name" value="B69954"/>
</dbReference>
<dbReference type="RefSeq" id="NP_390395.2">
    <property type="nucleotide sequence ID" value="NC_000964.3"/>
</dbReference>
<dbReference type="RefSeq" id="WP_003246170.1">
    <property type="nucleotide sequence ID" value="NZ_OZ025638.1"/>
</dbReference>
<dbReference type="SMR" id="P54473"/>
<dbReference type="FunCoup" id="P54473">
    <property type="interactions" value="368"/>
</dbReference>
<dbReference type="STRING" id="224308.BSU25160"/>
<dbReference type="PaxDb" id="224308-BSU25160"/>
<dbReference type="EnsemblBacteria" id="CAB14446">
    <property type="protein sequence ID" value="CAB14446"/>
    <property type="gene ID" value="BSU_25160"/>
</dbReference>
<dbReference type="GeneID" id="937900"/>
<dbReference type="KEGG" id="bsu:BSU25160"/>
<dbReference type="PATRIC" id="fig|224308.179.peg.2735"/>
<dbReference type="eggNOG" id="COG0761">
    <property type="taxonomic scope" value="Bacteria"/>
</dbReference>
<dbReference type="InParanoid" id="P54473"/>
<dbReference type="OrthoDB" id="9777362at2"/>
<dbReference type="PhylomeDB" id="P54473"/>
<dbReference type="BioCyc" id="BSUB:BSU25160-MONOMER"/>
<dbReference type="UniPathway" id="UPA00056">
    <property type="reaction ID" value="UER00097"/>
</dbReference>
<dbReference type="UniPathway" id="UPA00059">
    <property type="reaction ID" value="UER00105"/>
</dbReference>
<dbReference type="Proteomes" id="UP000001570">
    <property type="component" value="Chromosome"/>
</dbReference>
<dbReference type="GO" id="GO:0005829">
    <property type="term" value="C:cytosol"/>
    <property type="evidence" value="ECO:0000318"/>
    <property type="project" value="GO_Central"/>
</dbReference>
<dbReference type="GO" id="GO:0051539">
    <property type="term" value="F:4 iron, 4 sulfur cluster binding"/>
    <property type="evidence" value="ECO:0007669"/>
    <property type="project" value="UniProtKB-UniRule"/>
</dbReference>
<dbReference type="GO" id="GO:0051745">
    <property type="term" value="F:4-hydroxy-3-methylbut-2-enyl diphosphate reductase activity"/>
    <property type="evidence" value="ECO:0000318"/>
    <property type="project" value="GO_Central"/>
</dbReference>
<dbReference type="GO" id="GO:0046872">
    <property type="term" value="F:metal ion binding"/>
    <property type="evidence" value="ECO:0007669"/>
    <property type="project" value="UniProtKB-KW"/>
</dbReference>
<dbReference type="GO" id="GO:0050992">
    <property type="term" value="P:dimethylallyl diphosphate biosynthetic process"/>
    <property type="evidence" value="ECO:0007669"/>
    <property type="project" value="UniProtKB-UniRule"/>
</dbReference>
<dbReference type="GO" id="GO:0019288">
    <property type="term" value="P:isopentenyl diphosphate biosynthetic process, methylerythritol 4-phosphate pathway"/>
    <property type="evidence" value="ECO:0000318"/>
    <property type="project" value="GO_Central"/>
</dbReference>
<dbReference type="GO" id="GO:0016114">
    <property type="term" value="P:terpenoid biosynthetic process"/>
    <property type="evidence" value="ECO:0007669"/>
    <property type="project" value="UniProtKB-UniRule"/>
</dbReference>
<dbReference type="CDD" id="cd13944">
    <property type="entry name" value="lytB_ispH"/>
    <property type="match status" value="1"/>
</dbReference>
<dbReference type="Gene3D" id="3.40.50.11270">
    <property type="match status" value="1"/>
</dbReference>
<dbReference type="Gene3D" id="3.40.1010.20">
    <property type="entry name" value="4-hydroxy-3-methylbut-2-enyl diphosphate reductase, catalytic domain"/>
    <property type="match status" value="2"/>
</dbReference>
<dbReference type="HAMAP" id="MF_00191">
    <property type="entry name" value="IspH"/>
    <property type="match status" value="1"/>
</dbReference>
<dbReference type="InterPro" id="IPR003451">
    <property type="entry name" value="LytB/IspH"/>
</dbReference>
<dbReference type="NCBIfam" id="TIGR00216">
    <property type="entry name" value="ispH_lytB"/>
    <property type="match status" value="1"/>
</dbReference>
<dbReference type="NCBIfam" id="NF002187">
    <property type="entry name" value="PRK01045.1-1"/>
    <property type="match status" value="1"/>
</dbReference>
<dbReference type="PANTHER" id="PTHR30426">
    <property type="entry name" value="4-HYDROXY-3-METHYLBUT-2-ENYL DIPHOSPHATE REDUCTASE"/>
    <property type="match status" value="1"/>
</dbReference>
<dbReference type="PANTHER" id="PTHR30426:SF0">
    <property type="entry name" value="4-HYDROXY-3-METHYLBUT-2-ENYL DIPHOSPHATE REDUCTASE"/>
    <property type="match status" value="1"/>
</dbReference>
<dbReference type="Pfam" id="PF02401">
    <property type="entry name" value="LYTB"/>
    <property type="match status" value="1"/>
</dbReference>
<organism>
    <name type="scientific">Bacillus subtilis (strain 168)</name>
    <dbReference type="NCBI Taxonomy" id="224308"/>
    <lineage>
        <taxon>Bacteria</taxon>
        <taxon>Bacillati</taxon>
        <taxon>Bacillota</taxon>
        <taxon>Bacilli</taxon>
        <taxon>Bacillales</taxon>
        <taxon>Bacillaceae</taxon>
        <taxon>Bacillus</taxon>
    </lineage>
</organism>
<protein>
    <recommendedName>
        <fullName evidence="1">4-hydroxy-3-methylbut-2-enyl diphosphate reductase</fullName>
        <shortName evidence="1">HMBPP reductase</shortName>
        <ecNumber evidence="1">1.17.7.4</ecNumber>
    </recommendedName>
</protein>
<comment type="function">
    <text evidence="1">Catalyzes the conversion of 1-hydroxy-2-methyl-2-(E)-butenyl 4-diphosphate (HMBPP) into a mixture of isopentenyl diphosphate (IPP) and dimethylallyl diphosphate (DMAPP). Acts in the terminal step of the DOXP/MEP pathway for isoprenoid precursor biosynthesis.</text>
</comment>
<comment type="catalytic activity">
    <reaction evidence="1">
        <text>isopentenyl diphosphate + 2 oxidized [2Fe-2S]-[ferredoxin] + H2O = (2E)-4-hydroxy-3-methylbut-2-enyl diphosphate + 2 reduced [2Fe-2S]-[ferredoxin] + 2 H(+)</text>
        <dbReference type="Rhea" id="RHEA:24488"/>
        <dbReference type="Rhea" id="RHEA-COMP:10000"/>
        <dbReference type="Rhea" id="RHEA-COMP:10001"/>
        <dbReference type="ChEBI" id="CHEBI:15377"/>
        <dbReference type="ChEBI" id="CHEBI:15378"/>
        <dbReference type="ChEBI" id="CHEBI:33737"/>
        <dbReference type="ChEBI" id="CHEBI:33738"/>
        <dbReference type="ChEBI" id="CHEBI:128753"/>
        <dbReference type="ChEBI" id="CHEBI:128769"/>
        <dbReference type="EC" id="1.17.7.4"/>
    </reaction>
</comment>
<comment type="catalytic activity">
    <reaction evidence="1">
        <text>dimethylallyl diphosphate + 2 oxidized [2Fe-2S]-[ferredoxin] + H2O = (2E)-4-hydroxy-3-methylbut-2-enyl diphosphate + 2 reduced [2Fe-2S]-[ferredoxin] + 2 H(+)</text>
        <dbReference type="Rhea" id="RHEA:24825"/>
        <dbReference type="Rhea" id="RHEA-COMP:10000"/>
        <dbReference type="Rhea" id="RHEA-COMP:10001"/>
        <dbReference type="ChEBI" id="CHEBI:15377"/>
        <dbReference type="ChEBI" id="CHEBI:15378"/>
        <dbReference type="ChEBI" id="CHEBI:33737"/>
        <dbReference type="ChEBI" id="CHEBI:33738"/>
        <dbReference type="ChEBI" id="CHEBI:57623"/>
        <dbReference type="ChEBI" id="CHEBI:128753"/>
        <dbReference type="EC" id="1.17.7.4"/>
    </reaction>
</comment>
<comment type="cofactor">
    <cofactor evidence="1">
        <name>[4Fe-4S] cluster</name>
        <dbReference type="ChEBI" id="CHEBI:49883"/>
    </cofactor>
    <text evidence="1">Binds 1 [4Fe-4S] cluster per subunit.</text>
</comment>
<comment type="pathway">
    <text evidence="1">Isoprenoid biosynthesis; dimethylallyl diphosphate biosynthesis; dimethylallyl diphosphate from (2E)-4-hydroxy-3-methylbutenyl diphosphate: step 1/1.</text>
</comment>
<comment type="pathway">
    <text evidence="1">Isoprenoid biosynthesis; isopentenyl diphosphate biosynthesis via DXP pathway; isopentenyl diphosphate from 1-deoxy-D-xylulose 5-phosphate: step 6/6.</text>
</comment>
<comment type="similarity">
    <text evidence="1">Belongs to the IspH family.</text>
</comment>
<sequence length="314" mass="34958">MDVIKISPRGYCYGVVDAMVIAKNASLDKSLPRPIYILGMIVHNKHVTDAFEEEGIFTLDGSNRLDILKQVDKGTVIFTAHGVSPEVRRIAEEKGLVAIDATCPDVTKTHNLILEMKEKGYHVIYIGKKGHPEPEGAVGVAPEIVHLVETEEDVKNLDIQSEKLIVTNQTTMSQWDVHDIMELVKEKYPHVEYHQEICLATQVRQEAVSEQAKKADLTIVVGDPKSNNSNRLAQVSEEIAGTKAYRIGDLSELKLEWLKGVNTVAVTAGASTPTPITKEVIRFLEQFDHEDPSTWTTEHNIPLKKILPKVKAKN</sequence>
<reference key="1">
    <citation type="journal article" date="1996" name="Microbiology">
        <title>Systematic sequencing of the 283 kb 210 degrees-232 degrees region of the Bacillus subtilis genome containing the skin element and many sporulation genes.</title>
        <authorList>
            <person name="Mizuno M."/>
            <person name="Masuda S."/>
            <person name="Takemaru K."/>
            <person name="Hosono S."/>
            <person name="Sato T."/>
            <person name="Takeuchi M."/>
            <person name="Kobayashi Y."/>
        </authorList>
    </citation>
    <scope>NUCLEOTIDE SEQUENCE [GENOMIC DNA]</scope>
    <source>
        <strain>168 / JH642</strain>
    </source>
</reference>
<reference key="2">
    <citation type="journal article" date="1997" name="Nature">
        <title>The complete genome sequence of the Gram-positive bacterium Bacillus subtilis.</title>
        <authorList>
            <person name="Kunst F."/>
            <person name="Ogasawara N."/>
            <person name="Moszer I."/>
            <person name="Albertini A.M."/>
            <person name="Alloni G."/>
            <person name="Azevedo V."/>
            <person name="Bertero M.G."/>
            <person name="Bessieres P."/>
            <person name="Bolotin A."/>
            <person name="Borchert S."/>
            <person name="Borriss R."/>
            <person name="Boursier L."/>
            <person name="Brans A."/>
            <person name="Braun M."/>
            <person name="Brignell S.C."/>
            <person name="Bron S."/>
            <person name="Brouillet S."/>
            <person name="Bruschi C.V."/>
            <person name="Caldwell B."/>
            <person name="Capuano V."/>
            <person name="Carter N.M."/>
            <person name="Choi S.-K."/>
            <person name="Codani J.-J."/>
            <person name="Connerton I.F."/>
            <person name="Cummings N.J."/>
            <person name="Daniel R.A."/>
            <person name="Denizot F."/>
            <person name="Devine K.M."/>
            <person name="Duesterhoeft A."/>
            <person name="Ehrlich S.D."/>
            <person name="Emmerson P.T."/>
            <person name="Entian K.-D."/>
            <person name="Errington J."/>
            <person name="Fabret C."/>
            <person name="Ferrari E."/>
            <person name="Foulger D."/>
            <person name="Fritz C."/>
            <person name="Fujita M."/>
            <person name="Fujita Y."/>
            <person name="Fuma S."/>
            <person name="Galizzi A."/>
            <person name="Galleron N."/>
            <person name="Ghim S.-Y."/>
            <person name="Glaser P."/>
            <person name="Goffeau A."/>
            <person name="Golightly E.J."/>
            <person name="Grandi G."/>
            <person name="Guiseppi G."/>
            <person name="Guy B.J."/>
            <person name="Haga K."/>
            <person name="Haiech J."/>
            <person name="Harwood C.R."/>
            <person name="Henaut A."/>
            <person name="Hilbert H."/>
            <person name="Holsappel S."/>
            <person name="Hosono S."/>
            <person name="Hullo M.-F."/>
            <person name="Itaya M."/>
            <person name="Jones L.-M."/>
            <person name="Joris B."/>
            <person name="Karamata D."/>
            <person name="Kasahara Y."/>
            <person name="Klaerr-Blanchard M."/>
            <person name="Klein C."/>
            <person name="Kobayashi Y."/>
            <person name="Koetter P."/>
            <person name="Koningstein G."/>
            <person name="Krogh S."/>
            <person name="Kumano M."/>
            <person name="Kurita K."/>
            <person name="Lapidus A."/>
            <person name="Lardinois S."/>
            <person name="Lauber J."/>
            <person name="Lazarevic V."/>
            <person name="Lee S.-M."/>
            <person name="Levine A."/>
            <person name="Liu H."/>
            <person name="Masuda S."/>
            <person name="Mauel C."/>
            <person name="Medigue C."/>
            <person name="Medina N."/>
            <person name="Mellado R.P."/>
            <person name="Mizuno M."/>
            <person name="Moestl D."/>
            <person name="Nakai S."/>
            <person name="Noback M."/>
            <person name="Noone D."/>
            <person name="O'Reilly M."/>
            <person name="Ogawa K."/>
            <person name="Ogiwara A."/>
            <person name="Oudega B."/>
            <person name="Park S.-H."/>
            <person name="Parro V."/>
            <person name="Pohl T.M."/>
            <person name="Portetelle D."/>
            <person name="Porwollik S."/>
            <person name="Prescott A.M."/>
            <person name="Presecan E."/>
            <person name="Pujic P."/>
            <person name="Purnelle B."/>
            <person name="Rapoport G."/>
            <person name="Rey M."/>
            <person name="Reynolds S."/>
            <person name="Rieger M."/>
            <person name="Rivolta C."/>
            <person name="Rocha E."/>
            <person name="Roche B."/>
            <person name="Rose M."/>
            <person name="Sadaie Y."/>
            <person name="Sato T."/>
            <person name="Scanlan E."/>
            <person name="Schleich S."/>
            <person name="Schroeter R."/>
            <person name="Scoffone F."/>
            <person name="Sekiguchi J."/>
            <person name="Sekowska A."/>
            <person name="Seror S.J."/>
            <person name="Serror P."/>
            <person name="Shin B.-S."/>
            <person name="Soldo B."/>
            <person name="Sorokin A."/>
            <person name="Tacconi E."/>
            <person name="Takagi T."/>
            <person name="Takahashi H."/>
            <person name="Takemaru K."/>
            <person name="Takeuchi M."/>
            <person name="Tamakoshi A."/>
            <person name="Tanaka T."/>
            <person name="Terpstra P."/>
            <person name="Tognoni A."/>
            <person name="Tosato V."/>
            <person name="Uchiyama S."/>
            <person name="Vandenbol M."/>
            <person name="Vannier F."/>
            <person name="Vassarotti A."/>
            <person name="Viari A."/>
            <person name="Wambutt R."/>
            <person name="Wedler E."/>
            <person name="Wedler H."/>
            <person name="Weitzenegger T."/>
            <person name="Winters P."/>
            <person name="Wipat A."/>
            <person name="Yamamoto H."/>
            <person name="Yamane K."/>
            <person name="Yasumoto K."/>
            <person name="Yata K."/>
            <person name="Yoshida K."/>
            <person name="Yoshikawa H.-F."/>
            <person name="Zumstein E."/>
            <person name="Yoshikawa H."/>
            <person name="Danchin A."/>
        </authorList>
    </citation>
    <scope>NUCLEOTIDE SEQUENCE [LARGE SCALE GENOMIC DNA]</scope>
    <source>
        <strain>168</strain>
    </source>
</reference>
<reference key="3">
    <citation type="journal article" date="2009" name="Microbiology">
        <title>From a consortium sequence to a unified sequence: the Bacillus subtilis 168 reference genome a decade later.</title>
        <authorList>
            <person name="Barbe V."/>
            <person name="Cruveiller S."/>
            <person name="Kunst F."/>
            <person name="Lenoble P."/>
            <person name="Meurice G."/>
            <person name="Sekowska A."/>
            <person name="Vallenet D."/>
            <person name="Wang T."/>
            <person name="Moszer I."/>
            <person name="Medigue C."/>
            <person name="Danchin A."/>
        </authorList>
    </citation>
    <scope>SEQUENCE REVISION TO 57</scope>
</reference>
<name>ISPH_BACSU</name>
<evidence type="ECO:0000255" key="1">
    <source>
        <dbReference type="HAMAP-Rule" id="MF_00191"/>
    </source>
</evidence>
<evidence type="ECO:0000305" key="2"/>
<accession>P54473</accession>
<keyword id="KW-0004">4Fe-4S</keyword>
<keyword id="KW-0408">Iron</keyword>
<keyword id="KW-0411">Iron-sulfur</keyword>
<keyword id="KW-0414">Isoprene biosynthesis</keyword>
<keyword id="KW-0479">Metal-binding</keyword>
<keyword id="KW-0560">Oxidoreductase</keyword>
<keyword id="KW-1185">Reference proteome</keyword>
<feature type="chain" id="PRO_0000128776" description="4-hydroxy-3-methylbut-2-enyl diphosphate reductase">
    <location>
        <begin position="1"/>
        <end position="314"/>
    </location>
</feature>
<feature type="active site" description="Proton donor" evidence="1">
    <location>
        <position position="133"/>
    </location>
</feature>
<feature type="binding site" evidence="1">
    <location>
        <position position="12"/>
    </location>
    <ligand>
        <name>[4Fe-4S] cluster</name>
        <dbReference type="ChEBI" id="CHEBI:49883"/>
    </ligand>
</feature>
<feature type="binding site" evidence="1">
    <location>
        <position position="43"/>
    </location>
    <ligand>
        <name>(2E)-4-hydroxy-3-methylbut-2-enyl diphosphate</name>
        <dbReference type="ChEBI" id="CHEBI:128753"/>
    </ligand>
</feature>
<feature type="binding site" evidence="1">
    <location>
        <position position="43"/>
    </location>
    <ligand>
        <name>dimethylallyl diphosphate</name>
        <dbReference type="ChEBI" id="CHEBI:57623"/>
    </ligand>
</feature>
<feature type="binding site" evidence="1">
    <location>
        <position position="43"/>
    </location>
    <ligand>
        <name>isopentenyl diphosphate</name>
        <dbReference type="ChEBI" id="CHEBI:128769"/>
    </ligand>
</feature>
<feature type="binding site" evidence="1">
    <location>
        <position position="81"/>
    </location>
    <ligand>
        <name>(2E)-4-hydroxy-3-methylbut-2-enyl diphosphate</name>
        <dbReference type="ChEBI" id="CHEBI:128753"/>
    </ligand>
</feature>
<feature type="binding site" evidence="1">
    <location>
        <position position="81"/>
    </location>
    <ligand>
        <name>dimethylallyl diphosphate</name>
        <dbReference type="ChEBI" id="CHEBI:57623"/>
    </ligand>
</feature>
<feature type="binding site" evidence="1">
    <location>
        <position position="81"/>
    </location>
    <ligand>
        <name>isopentenyl diphosphate</name>
        <dbReference type="ChEBI" id="CHEBI:128769"/>
    </ligand>
</feature>
<feature type="binding site" evidence="1">
    <location>
        <position position="103"/>
    </location>
    <ligand>
        <name>[4Fe-4S] cluster</name>
        <dbReference type="ChEBI" id="CHEBI:49883"/>
    </ligand>
</feature>
<feature type="binding site" evidence="1">
    <location>
        <position position="131"/>
    </location>
    <ligand>
        <name>(2E)-4-hydroxy-3-methylbut-2-enyl diphosphate</name>
        <dbReference type="ChEBI" id="CHEBI:128753"/>
    </ligand>
</feature>
<feature type="binding site" evidence="1">
    <location>
        <position position="131"/>
    </location>
    <ligand>
        <name>dimethylallyl diphosphate</name>
        <dbReference type="ChEBI" id="CHEBI:57623"/>
    </ligand>
</feature>
<feature type="binding site" evidence="1">
    <location>
        <position position="131"/>
    </location>
    <ligand>
        <name>isopentenyl diphosphate</name>
        <dbReference type="ChEBI" id="CHEBI:128769"/>
    </ligand>
</feature>
<feature type="binding site" evidence="1">
    <location>
        <position position="170"/>
    </location>
    <ligand>
        <name>(2E)-4-hydroxy-3-methylbut-2-enyl diphosphate</name>
        <dbReference type="ChEBI" id="CHEBI:128753"/>
    </ligand>
</feature>
<feature type="binding site" evidence="1">
    <location>
        <position position="198"/>
    </location>
    <ligand>
        <name>[4Fe-4S] cluster</name>
        <dbReference type="ChEBI" id="CHEBI:49883"/>
    </ligand>
</feature>
<feature type="binding site" evidence="1">
    <location>
        <position position="226"/>
    </location>
    <ligand>
        <name>(2E)-4-hydroxy-3-methylbut-2-enyl diphosphate</name>
        <dbReference type="ChEBI" id="CHEBI:128753"/>
    </ligand>
</feature>
<feature type="binding site" evidence="1">
    <location>
        <position position="226"/>
    </location>
    <ligand>
        <name>dimethylallyl diphosphate</name>
        <dbReference type="ChEBI" id="CHEBI:57623"/>
    </ligand>
</feature>
<feature type="binding site" evidence="1">
    <location>
        <position position="226"/>
    </location>
    <ligand>
        <name>isopentenyl diphosphate</name>
        <dbReference type="ChEBI" id="CHEBI:128769"/>
    </ligand>
</feature>
<feature type="binding site" evidence="1">
    <location>
        <position position="228"/>
    </location>
    <ligand>
        <name>(2E)-4-hydroxy-3-methylbut-2-enyl diphosphate</name>
        <dbReference type="ChEBI" id="CHEBI:128753"/>
    </ligand>
</feature>
<feature type="binding site" evidence="1">
    <location>
        <position position="228"/>
    </location>
    <ligand>
        <name>dimethylallyl diphosphate</name>
        <dbReference type="ChEBI" id="CHEBI:57623"/>
    </ligand>
</feature>
<feature type="binding site" evidence="1">
    <location>
        <position position="228"/>
    </location>
    <ligand>
        <name>isopentenyl diphosphate</name>
        <dbReference type="ChEBI" id="CHEBI:128769"/>
    </ligand>
</feature>
<feature type="binding site" evidence="1">
    <location>
        <position position="271"/>
    </location>
    <ligand>
        <name>(2E)-4-hydroxy-3-methylbut-2-enyl diphosphate</name>
        <dbReference type="ChEBI" id="CHEBI:128753"/>
    </ligand>
</feature>
<feature type="binding site" evidence="1">
    <location>
        <position position="271"/>
    </location>
    <ligand>
        <name>dimethylallyl diphosphate</name>
        <dbReference type="ChEBI" id="CHEBI:57623"/>
    </ligand>
</feature>
<feature type="binding site" evidence="1">
    <location>
        <position position="271"/>
    </location>
    <ligand>
        <name>isopentenyl diphosphate</name>
        <dbReference type="ChEBI" id="CHEBI:128769"/>
    </ligand>
</feature>
<feature type="sequence conflict" description="In Ref. 1; BAA12493." evidence="2" ref="1">
    <original>F</original>
    <variation>L</variation>
    <location>
        <position position="57"/>
    </location>
</feature>
<proteinExistence type="inferred from homology"/>